<accession>A6T450</accession>
<reference key="1">
    <citation type="journal article" date="2007" name="PLoS Genet.">
        <title>Genome analysis of Minibacterium massiliensis highlights the convergent evolution of water-living bacteria.</title>
        <authorList>
            <person name="Audic S."/>
            <person name="Robert C."/>
            <person name="Campagna B."/>
            <person name="Parinello H."/>
            <person name="Claverie J.-M."/>
            <person name="Raoult D."/>
            <person name="Drancourt M."/>
        </authorList>
    </citation>
    <scope>NUCLEOTIDE SEQUENCE [LARGE SCALE GENOMIC DNA]</scope>
    <source>
        <strain>Marseille</strain>
    </source>
</reference>
<comment type="function">
    <text evidence="1">Catalyzes the decarboxylation of four acetate groups of uroporphyrinogen-III to yield coproporphyrinogen-III.</text>
</comment>
<comment type="catalytic activity">
    <reaction evidence="1">
        <text>uroporphyrinogen III + 4 H(+) = coproporphyrinogen III + 4 CO2</text>
        <dbReference type="Rhea" id="RHEA:19865"/>
        <dbReference type="ChEBI" id="CHEBI:15378"/>
        <dbReference type="ChEBI" id="CHEBI:16526"/>
        <dbReference type="ChEBI" id="CHEBI:57308"/>
        <dbReference type="ChEBI" id="CHEBI:57309"/>
        <dbReference type="EC" id="4.1.1.37"/>
    </reaction>
</comment>
<comment type="pathway">
    <text evidence="1">Porphyrin-containing compound metabolism; protoporphyrin-IX biosynthesis; coproporphyrinogen-III from 5-aminolevulinate: step 4/4.</text>
</comment>
<comment type="subunit">
    <text evidence="1">Homodimer.</text>
</comment>
<comment type="subcellular location">
    <subcellularLocation>
        <location evidence="1">Cytoplasm</location>
    </subcellularLocation>
</comment>
<comment type="similarity">
    <text evidence="1">Belongs to the uroporphyrinogen decarboxylase family.</text>
</comment>
<evidence type="ECO:0000255" key="1">
    <source>
        <dbReference type="HAMAP-Rule" id="MF_00218"/>
    </source>
</evidence>
<organism>
    <name type="scientific">Janthinobacterium sp. (strain Marseille)</name>
    <name type="common">Minibacterium massiliensis</name>
    <dbReference type="NCBI Taxonomy" id="375286"/>
    <lineage>
        <taxon>Bacteria</taxon>
        <taxon>Pseudomonadati</taxon>
        <taxon>Pseudomonadota</taxon>
        <taxon>Betaproteobacteria</taxon>
        <taxon>Burkholderiales</taxon>
        <taxon>Oxalobacteraceae</taxon>
        <taxon>Janthinobacterium</taxon>
    </lineage>
</organism>
<feature type="chain" id="PRO_0000325658" description="Uroporphyrinogen decarboxylase">
    <location>
        <begin position="1"/>
        <end position="360"/>
    </location>
</feature>
<feature type="binding site" evidence="1">
    <location>
        <begin position="31"/>
        <end position="35"/>
    </location>
    <ligand>
        <name>substrate</name>
    </ligand>
</feature>
<feature type="binding site" evidence="1">
    <location>
        <position position="81"/>
    </location>
    <ligand>
        <name>substrate</name>
    </ligand>
</feature>
<feature type="binding site" evidence="1">
    <location>
        <position position="157"/>
    </location>
    <ligand>
        <name>substrate</name>
    </ligand>
</feature>
<feature type="binding site" evidence="1">
    <location>
        <position position="212"/>
    </location>
    <ligand>
        <name>substrate</name>
    </ligand>
</feature>
<feature type="binding site" evidence="1">
    <location>
        <position position="333"/>
    </location>
    <ligand>
        <name>substrate</name>
    </ligand>
</feature>
<feature type="site" description="Transition state stabilizer" evidence="1">
    <location>
        <position position="81"/>
    </location>
</feature>
<keyword id="KW-0963">Cytoplasm</keyword>
<keyword id="KW-0210">Decarboxylase</keyword>
<keyword id="KW-0456">Lyase</keyword>
<keyword id="KW-0627">Porphyrin biosynthesis</keyword>
<protein>
    <recommendedName>
        <fullName evidence="1">Uroporphyrinogen decarboxylase</fullName>
        <shortName evidence="1">UPD</shortName>
        <shortName evidence="1">URO-D</shortName>
        <ecNumber evidence="1">4.1.1.37</ecNumber>
    </recommendedName>
</protein>
<sequence length="360" mass="39554">MPTQFAPLQNDTFLRALLRQPTEYTPLWLMRQAGRYLPEYRATRARAGSFLGLAKNPDFATEVTLQPLDRYKLDAAILFSDILTVPDAMGLGLYFIEGEGPKFERPLRDEKAVQALKVPELGSLQYVFDAVTQIRTELKGRVPLIGFTGSPWTLACYMVEGGGSDDFRTVKAMLYNRPDLMHHILQTNALTVAAYLNAQIDAGAQAVMMFDTWGGALADGAYQQFSLHYMREVMKHVKTEKDGVRIPSIVFTKGGGLWLKEIAAVGADAVGLDWTVNLGAARAKVGERVALQGNLDPSILFAQPDQIRAEVAKVLESFGKHSAGSGHVFNLGHGISQFTPPEAVTVLVDAVHELSRPLHK</sequence>
<gene>
    <name evidence="1" type="primary">hemE</name>
    <name type="ordered locus">mma_3607</name>
</gene>
<proteinExistence type="inferred from homology"/>
<dbReference type="EC" id="4.1.1.37" evidence="1"/>
<dbReference type="EMBL" id="CP000269">
    <property type="protein sequence ID" value="ABR88675.1"/>
    <property type="molecule type" value="Genomic_DNA"/>
</dbReference>
<dbReference type="RefSeq" id="WP_012081443.1">
    <property type="nucleotide sequence ID" value="NC_009659.1"/>
</dbReference>
<dbReference type="SMR" id="A6T450"/>
<dbReference type="STRING" id="375286.mma_3607"/>
<dbReference type="KEGG" id="mms:mma_3607"/>
<dbReference type="eggNOG" id="COG0407">
    <property type="taxonomic scope" value="Bacteria"/>
</dbReference>
<dbReference type="HOGENOM" id="CLU_040933_0_0_4"/>
<dbReference type="OrthoDB" id="9806656at2"/>
<dbReference type="UniPathway" id="UPA00251">
    <property type="reaction ID" value="UER00321"/>
</dbReference>
<dbReference type="Proteomes" id="UP000006388">
    <property type="component" value="Chromosome"/>
</dbReference>
<dbReference type="GO" id="GO:0005829">
    <property type="term" value="C:cytosol"/>
    <property type="evidence" value="ECO:0007669"/>
    <property type="project" value="TreeGrafter"/>
</dbReference>
<dbReference type="GO" id="GO:0004853">
    <property type="term" value="F:uroporphyrinogen decarboxylase activity"/>
    <property type="evidence" value="ECO:0007669"/>
    <property type="project" value="UniProtKB-UniRule"/>
</dbReference>
<dbReference type="GO" id="GO:0019353">
    <property type="term" value="P:protoporphyrinogen IX biosynthetic process from glutamate"/>
    <property type="evidence" value="ECO:0007669"/>
    <property type="project" value="TreeGrafter"/>
</dbReference>
<dbReference type="CDD" id="cd00717">
    <property type="entry name" value="URO-D"/>
    <property type="match status" value="1"/>
</dbReference>
<dbReference type="FunFam" id="3.20.20.210:FF:000001">
    <property type="entry name" value="Uroporphyrinogen decarboxylase"/>
    <property type="match status" value="1"/>
</dbReference>
<dbReference type="Gene3D" id="3.20.20.210">
    <property type="match status" value="1"/>
</dbReference>
<dbReference type="HAMAP" id="MF_00218">
    <property type="entry name" value="URO_D"/>
    <property type="match status" value="1"/>
</dbReference>
<dbReference type="InterPro" id="IPR038071">
    <property type="entry name" value="UROD/MetE-like_sf"/>
</dbReference>
<dbReference type="InterPro" id="IPR006361">
    <property type="entry name" value="Uroporphyrinogen_deCO2ase_HemE"/>
</dbReference>
<dbReference type="InterPro" id="IPR000257">
    <property type="entry name" value="Uroporphyrinogen_deCOase"/>
</dbReference>
<dbReference type="NCBIfam" id="TIGR01464">
    <property type="entry name" value="hemE"/>
    <property type="match status" value="1"/>
</dbReference>
<dbReference type="PANTHER" id="PTHR21091">
    <property type="entry name" value="METHYLTETRAHYDROFOLATE:HOMOCYSTEINE METHYLTRANSFERASE RELATED"/>
    <property type="match status" value="1"/>
</dbReference>
<dbReference type="PANTHER" id="PTHR21091:SF169">
    <property type="entry name" value="UROPORPHYRINOGEN DECARBOXYLASE"/>
    <property type="match status" value="1"/>
</dbReference>
<dbReference type="Pfam" id="PF01208">
    <property type="entry name" value="URO-D"/>
    <property type="match status" value="1"/>
</dbReference>
<dbReference type="SUPFAM" id="SSF51726">
    <property type="entry name" value="UROD/MetE-like"/>
    <property type="match status" value="1"/>
</dbReference>
<dbReference type="PROSITE" id="PS00906">
    <property type="entry name" value="UROD_1"/>
    <property type="match status" value="1"/>
</dbReference>
<dbReference type="PROSITE" id="PS00907">
    <property type="entry name" value="UROD_2"/>
    <property type="match status" value="1"/>
</dbReference>
<name>DCUP_JANMA</name>